<sequence length="91" mass="10720">MDEVKYPVLTEKSIRLLERNQYTFNVDLQSNKTKIKNWIENFFDVKVIAMNSYRLPEKGGKRGSMIVHPIRCKRMIITLRTGDSIPLFSEQ</sequence>
<dbReference type="EMBL" id="AY228468">
    <property type="protein sequence ID" value="AAO74083.1"/>
    <property type="molecule type" value="Genomic_DNA"/>
</dbReference>
<dbReference type="RefSeq" id="NP_817237.1">
    <property type="nucleotide sequence ID" value="NC_004677.2"/>
</dbReference>
<dbReference type="SMR" id="Q85WY6"/>
<dbReference type="GeneID" id="806929"/>
<dbReference type="GO" id="GO:0009507">
    <property type="term" value="C:chloroplast"/>
    <property type="evidence" value="ECO:0007669"/>
    <property type="project" value="UniProtKB-SubCell"/>
</dbReference>
<dbReference type="GO" id="GO:1990904">
    <property type="term" value="C:ribonucleoprotein complex"/>
    <property type="evidence" value="ECO:0007669"/>
    <property type="project" value="UniProtKB-KW"/>
</dbReference>
<dbReference type="GO" id="GO:0005840">
    <property type="term" value="C:ribosome"/>
    <property type="evidence" value="ECO:0007669"/>
    <property type="project" value="UniProtKB-KW"/>
</dbReference>
<dbReference type="GO" id="GO:0019843">
    <property type="term" value="F:rRNA binding"/>
    <property type="evidence" value="ECO:0007669"/>
    <property type="project" value="UniProtKB-UniRule"/>
</dbReference>
<dbReference type="GO" id="GO:0003735">
    <property type="term" value="F:structural constituent of ribosome"/>
    <property type="evidence" value="ECO:0007669"/>
    <property type="project" value="InterPro"/>
</dbReference>
<dbReference type="GO" id="GO:0006412">
    <property type="term" value="P:translation"/>
    <property type="evidence" value="ECO:0007669"/>
    <property type="project" value="UniProtKB-UniRule"/>
</dbReference>
<dbReference type="Gene3D" id="3.30.70.330">
    <property type="match status" value="1"/>
</dbReference>
<dbReference type="HAMAP" id="MF_01369_B">
    <property type="entry name" value="Ribosomal_uL23_B"/>
    <property type="match status" value="1"/>
</dbReference>
<dbReference type="InterPro" id="IPR012677">
    <property type="entry name" value="Nucleotide-bd_a/b_plait_sf"/>
</dbReference>
<dbReference type="InterPro" id="IPR013025">
    <property type="entry name" value="Ribosomal_uL23-like"/>
</dbReference>
<dbReference type="InterPro" id="IPR012678">
    <property type="entry name" value="Ribosomal_uL23/eL15/eS24_sf"/>
</dbReference>
<dbReference type="PANTHER" id="PTHR11620">
    <property type="entry name" value="60S RIBOSOMAL PROTEIN L23A"/>
    <property type="match status" value="1"/>
</dbReference>
<dbReference type="Pfam" id="PF00276">
    <property type="entry name" value="Ribosomal_L23"/>
    <property type="match status" value="1"/>
</dbReference>
<dbReference type="SUPFAM" id="SSF54189">
    <property type="entry name" value="Ribosomal proteins S24e, L23 and L15e"/>
    <property type="match status" value="1"/>
</dbReference>
<gene>
    <name type="primary">rpl23</name>
</gene>
<proteinExistence type="inferred from homology"/>
<organism>
    <name type="scientific">Pinus koraiensis</name>
    <name type="common">Korean pine</name>
    <dbReference type="NCBI Taxonomy" id="88728"/>
    <lineage>
        <taxon>Eukaryota</taxon>
        <taxon>Viridiplantae</taxon>
        <taxon>Streptophyta</taxon>
        <taxon>Embryophyta</taxon>
        <taxon>Tracheophyta</taxon>
        <taxon>Spermatophyta</taxon>
        <taxon>Pinopsida</taxon>
        <taxon>Pinidae</taxon>
        <taxon>Conifers I</taxon>
        <taxon>Pinales</taxon>
        <taxon>Pinaceae</taxon>
        <taxon>Pinus</taxon>
        <taxon>Pinus subgen. Strobus</taxon>
    </lineage>
</organism>
<protein>
    <recommendedName>
        <fullName evidence="2">Large ribosomal subunit protein uL23c</fullName>
    </recommendedName>
    <alternativeName>
        <fullName>50S ribosomal protein L23, chloroplastic</fullName>
    </alternativeName>
</protein>
<accession>Q85WY6</accession>
<reference key="1">
    <citation type="submission" date="2003-02" db="EMBL/GenBank/DDBJ databases">
        <title>Complete nucleotide sequence of Pinus koraiensis.</title>
        <authorList>
            <person name="Noh E.W."/>
            <person name="Lee J.S."/>
            <person name="Choi Y.I."/>
            <person name="Han M.S."/>
            <person name="Yi Y.S."/>
            <person name="Han S.U."/>
        </authorList>
    </citation>
    <scope>NUCLEOTIDE SEQUENCE [LARGE SCALE GENOMIC DNA]</scope>
    <source>
        <strain>KangWon16</strain>
    </source>
</reference>
<keyword id="KW-0150">Chloroplast</keyword>
<keyword id="KW-0934">Plastid</keyword>
<keyword id="KW-0687">Ribonucleoprotein</keyword>
<keyword id="KW-0689">Ribosomal protein</keyword>
<keyword id="KW-0694">RNA-binding</keyword>
<keyword id="KW-0699">rRNA-binding</keyword>
<feature type="chain" id="PRO_0000272921" description="Large ribosomal subunit protein uL23c">
    <location>
        <begin position="1"/>
        <end position="91"/>
    </location>
</feature>
<evidence type="ECO:0000250" key="1"/>
<evidence type="ECO:0000305" key="2"/>
<name>RK23_PINKO</name>
<comment type="function">
    <text evidence="1">Binds to 23S rRNA.</text>
</comment>
<comment type="subunit">
    <text evidence="1">Part of the 50S ribosomal subunit.</text>
</comment>
<comment type="subcellular location">
    <subcellularLocation>
        <location>Plastid</location>
        <location>Chloroplast</location>
    </subcellularLocation>
</comment>
<comment type="similarity">
    <text evidence="2">Belongs to the universal ribosomal protein uL23 family.</text>
</comment>
<geneLocation type="chloroplast"/>